<sequence length="345" mass="39292">MNKKKRVLTGDRPTGKLHLGHWVGSIKNRLDLQNNPAYDCFFIIADLHTLTTRVRKEQVVDVDNHIYEVLADWLSVGIDPNKSSIYLQSAIPEIYELHLLFSMLISVNRIMGIPSLKEMAKNASIEEGGLSLGLMGYPVLQSADILLAKAQLVPVGKDNEAHIELTRDIARNFNRLYGEIFPEPETLQGELTSLVGIDGQGKMSKSANNAIYLSDDDATIEDKVRRMYTDPNRIHASTPGRVEGNPLFIYHDIFNPNKEEVEEFKTRYRQGCIKDVEIKTRLAEELIRFLQPFREKRAELLAHPKILQEALQKGTENMCALAKETMEEVHNTLELSRKWRSRLSL</sequence>
<feature type="chain" id="PRO_0000136617" description="Tryptophan--tRNA ligase">
    <location>
        <begin position="1"/>
        <end position="345"/>
    </location>
</feature>
<feature type="short sequence motif" description="'HIGH' region" evidence="1">
    <location>
        <begin position="13"/>
        <end position="21"/>
    </location>
</feature>
<feature type="short sequence motif" description="'KMSKS' region" evidence="1">
    <location>
        <begin position="202"/>
        <end position="206"/>
    </location>
</feature>
<feature type="binding site" evidence="1">
    <location>
        <begin position="12"/>
        <end position="14"/>
    </location>
    <ligand>
        <name>ATP</name>
        <dbReference type="ChEBI" id="CHEBI:30616"/>
    </ligand>
</feature>
<feature type="binding site" evidence="1">
    <location>
        <begin position="20"/>
        <end position="21"/>
    </location>
    <ligand>
        <name>ATP</name>
        <dbReference type="ChEBI" id="CHEBI:30616"/>
    </ligand>
</feature>
<feature type="binding site" evidence="1">
    <location>
        <position position="144"/>
    </location>
    <ligand>
        <name>L-tryptophan</name>
        <dbReference type="ChEBI" id="CHEBI:57912"/>
    </ligand>
</feature>
<feature type="binding site" evidence="1">
    <location>
        <begin position="156"/>
        <end position="158"/>
    </location>
    <ligand>
        <name>ATP</name>
        <dbReference type="ChEBI" id="CHEBI:30616"/>
    </ligand>
</feature>
<feature type="binding site" evidence="1">
    <location>
        <position position="194"/>
    </location>
    <ligand>
        <name>ATP</name>
        <dbReference type="ChEBI" id="CHEBI:30616"/>
    </ligand>
</feature>
<feature type="binding site" evidence="1">
    <location>
        <begin position="202"/>
        <end position="206"/>
    </location>
    <ligand>
        <name>ATP</name>
        <dbReference type="ChEBI" id="CHEBI:30616"/>
    </ligand>
</feature>
<reference key="1">
    <citation type="journal article" date="2003" name="Nucleic Acids Res.">
        <title>Genome sequence of Chlamydophila caviae (Chlamydia psittaci GPIC): examining the role of niche-specific genes in the evolution of the Chlamydiaceae.</title>
        <authorList>
            <person name="Read T.D."/>
            <person name="Myers G.S.A."/>
            <person name="Brunham R.C."/>
            <person name="Nelson W.C."/>
            <person name="Paulsen I.T."/>
            <person name="Heidelberg J.F."/>
            <person name="Holtzapple E.K."/>
            <person name="Khouri H.M."/>
            <person name="Federova N.B."/>
            <person name="Carty H.A."/>
            <person name="Umayam L.A."/>
            <person name="Haft D.H."/>
            <person name="Peterson J.D."/>
            <person name="Beanan M.J."/>
            <person name="White O."/>
            <person name="Salzberg S.L."/>
            <person name="Hsia R.-C."/>
            <person name="McClarty G."/>
            <person name="Rank R.G."/>
            <person name="Bavoil P.M."/>
            <person name="Fraser C.M."/>
        </authorList>
    </citation>
    <scope>NUCLEOTIDE SEQUENCE [LARGE SCALE GENOMIC DNA]</scope>
    <source>
        <strain>ATCC VR-813 / DSM 19441 / 03DC25 / GPIC</strain>
    </source>
</reference>
<comment type="function">
    <text evidence="1">Catalyzes the attachment of tryptophan to tRNA(Trp).</text>
</comment>
<comment type="catalytic activity">
    <reaction evidence="1">
        <text>tRNA(Trp) + L-tryptophan + ATP = L-tryptophyl-tRNA(Trp) + AMP + diphosphate + H(+)</text>
        <dbReference type="Rhea" id="RHEA:24080"/>
        <dbReference type="Rhea" id="RHEA-COMP:9671"/>
        <dbReference type="Rhea" id="RHEA-COMP:9705"/>
        <dbReference type="ChEBI" id="CHEBI:15378"/>
        <dbReference type="ChEBI" id="CHEBI:30616"/>
        <dbReference type="ChEBI" id="CHEBI:33019"/>
        <dbReference type="ChEBI" id="CHEBI:57912"/>
        <dbReference type="ChEBI" id="CHEBI:78442"/>
        <dbReference type="ChEBI" id="CHEBI:78535"/>
        <dbReference type="ChEBI" id="CHEBI:456215"/>
        <dbReference type="EC" id="6.1.1.2"/>
    </reaction>
</comment>
<comment type="subunit">
    <text evidence="1">Homodimer.</text>
</comment>
<comment type="subcellular location">
    <subcellularLocation>
        <location evidence="1">Cytoplasm</location>
    </subcellularLocation>
</comment>
<comment type="similarity">
    <text evidence="1">Belongs to the class-I aminoacyl-tRNA synthetase family.</text>
</comment>
<organism>
    <name type="scientific">Chlamydia caviae (strain ATCC VR-813 / DSM 19441 / 03DC25 / GPIC)</name>
    <name type="common">Chlamydophila caviae</name>
    <dbReference type="NCBI Taxonomy" id="227941"/>
    <lineage>
        <taxon>Bacteria</taxon>
        <taxon>Pseudomonadati</taxon>
        <taxon>Chlamydiota</taxon>
        <taxon>Chlamydiia</taxon>
        <taxon>Chlamydiales</taxon>
        <taxon>Chlamydiaceae</taxon>
        <taxon>Chlamydia/Chlamydophila group</taxon>
        <taxon>Chlamydia</taxon>
    </lineage>
</organism>
<gene>
    <name evidence="1" type="primary">trpS</name>
    <name type="ordered locus">CCA_00961</name>
</gene>
<accession>Q821H9</accession>
<proteinExistence type="inferred from homology"/>
<evidence type="ECO:0000255" key="1">
    <source>
        <dbReference type="HAMAP-Rule" id="MF_00140"/>
    </source>
</evidence>
<name>SYW_CHLCV</name>
<protein>
    <recommendedName>
        <fullName evidence="1">Tryptophan--tRNA ligase</fullName>
        <ecNumber evidence="1">6.1.1.2</ecNumber>
    </recommendedName>
    <alternativeName>
        <fullName evidence="1">Tryptophanyl-tRNA synthetase</fullName>
        <shortName evidence="1">TrpRS</shortName>
    </alternativeName>
</protein>
<dbReference type="EC" id="6.1.1.2" evidence="1"/>
<dbReference type="EMBL" id="AE015925">
    <property type="protein sequence ID" value="AAP05700.1"/>
    <property type="molecule type" value="Genomic_DNA"/>
</dbReference>
<dbReference type="RefSeq" id="WP_011006913.1">
    <property type="nucleotide sequence ID" value="NC_003361.3"/>
</dbReference>
<dbReference type="SMR" id="Q821H9"/>
<dbReference type="STRING" id="227941.CCA_00961"/>
<dbReference type="KEGG" id="cca:CCA_00961"/>
<dbReference type="eggNOG" id="COG0180">
    <property type="taxonomic scope" value="Bacteria"/>
</dbReference>
<dbReference type="HOGENOM" id="CLU_029244_0_1_0"/>
<dbReference type="OrthoDB" id="9801042at2"/>
<dbReference type="Proteomes" id="UP000002193">
    <property type="component" value="Chromosome"/>
</dbReference>
<dbReference type="GO" id="GO:0005829">
    <property type="term" value="C:cytosol"/>
    <property type="evidence" value="ECO:0007669"/>
    <property type="project" value="TreeGrafter"/>
</dbReference>
<dbReference type="GO" id="GO:0005524">
    <property type="term" value="F:ATP binding"/>
    <property type="evidence" value="ECO:0007669"/>
    <property type="project" value="UniProtKB-UniRule"/>
</dbReference>
<dbReference type="GO" id="GO:0004830">
    <property type="term" value="F:tryptophan-tRNA ligase activity"/>
    <property type="evidence" value="ECO:0007669"/>
    <property type="project" value="UniProtKB-UniRule"/>
</dbReference>
<dbReference type="GO" id="GO:0006436">
    <property type="term" value="P:tryptophanyl-tRNA aminoacylation"/>
    <property type="evidence" value="ECO:0007669"/>
    <property type="project" value="UniProtKB-UniRule"/>
</dbReference>
<dbReference type="CDD" id="cd00806">
    <property type="entry name" value="TrpRS_core"/>
    <property type="match status" value="1"/>
</dbReference>
<dbReference type="FunFam" id="1.10.240.10:FF:000005">
    <property type="entry name" value="Tryptophan--tRNA ligase"/>
    <property type="match status" value="1"/>
</dbReference>
<dbReference type="Gene3D" id="3.40.50.620">
    <property type="entry name" value="HUPs"/>
    <property type="match status" value="1"/>
</dbReference>
<dbReference type="Gene3D" id="1.10.240.10">
    <property type="entry name" value="Tyrosyl-Transfer RNA Synthetase"/>
    <property type="match status" value="1"/>
</dbReference>
<dbReference type="HAMAP" id="MF_00140_B">
    <property type="entry name" value="Trp_tRNA_synth_B"/>
    <property type="match status" value="1"/>
</dbReference>
<dbReference type="InterPro" id="IPR002305">
    <property type="entry name" value="aa-tRNA-synth_Ic"/>
</dbReference>
<dbReference type="InterPro" id="IPR014729">
    <property type="entry name" value="Rossmann-like_a/b/a_fold"/>
</dbReference>
<dbReference type="InterPro" id="IPR002306">
    <property type="entry name" value="Trp-tRNA-ligase"/>
</dbReference>
<dbReference type="InterPro" id="IPR024109">
    <property type="entry name" value="Trp-tRNA-ligase_bac-type"/>
</dbReference>
<dbReference type="InterPro" id="IPR050203">
    <property type="entry name" value="Trp-tRNA_synthetase"/>
</dbReference>
<dbReference type="NCBIfam" id="TIGR00233">
    <property type="entry name" value="trpS"/>
    <property type="match status" value="1"/>
</dbReference>
<dbReference type="PANTHER" id="PTHR43766">
    <property type="entry name" value="TRYPTOPHAN--TRNA LIGASE, MITOCHONDRIAL"/>
    <property type="match status" value="1"/>
</dbReference>
<dbReference type="PANTHER" id="PTHR43766:SF1">
    <property type="entry name" value="TRYPTOPHAN--TRNA LIGASE, MITOCHONDRIAL"/>
    <property type="match status" value="1"/>
</dbReference>
<dbReference type="Pfam" id="PF00579">
    <property type="entry name" value="tRNA-synt_1b"/>
    <property type="match status" value="1"/>
</dbReference>
<dbReference type="PRINTS" id="PR01039">
    <property type="entry name" value="TRNASYNTHTRP"/>
</dbReference>
<dbReference type="SUPFAM" id="SSF52374">
    <property type="entry name" value="Nucleotidylyl transferase"/>
    <property type="match status" value="1"/>
</dbReference>
<keyword id="KW-0030">Aminoacyl-tRNA synthetase</keyword>
<keyword id="KW-0067">ATP-binding</keyword>
<keyword id="KW-0963">Cytoplasm</keyword>
<keyword id="KW-0436">Ligase</keyword>
<keyword id="KW-0547">Nucleotide-binding</keyword>
<keyword id="KW-0648">Protein biosynthesis</keyword>